<gene>
    <name type="primary">Cdk5r2</name>
    <name type="synonym">Nck5ai</name>
</gene>
<proteinExistence type="evidence at protein level"/>
<accession>O35926</accession>
<accession>O35277</accession>
<accession>Q9QYD1</accession>
<evidence type="ECO:0000250" key="1"/>
<evidence type="ECO:0000255" key="2"/>
<evidence type="ECO:0000256" key="3">
    <source>
        <dbReference type="SAM" id="MobiDB-lite"/>
    </source>
</evidence>
<evidence type="ECO:0000305" key="4"/>
<evidence type="ECO:0007744" key="5">
    <source>
    </source>
</evidence>
<protein>
    <recommendedName>
        <fullName>Cyclin-dependent kinase 5 activator 2</fullName>
        <shortName>CDK5 activator 2</shortName>
    </recommendedName>
    <alternativeName>
        <fullName>Cyclin-dependent kinase 5 regulatory subunit 2</fullName>
    </alternativeName>
    <alternativeName>
        <fullName>p39</fullName>
    </alternativeName>
    <alternativeName>
        <fullName>p39I</fullName>
    </alternativeName>
</protein>
<name>CD5R2_MOUSE</name>
<dbReference type="EMBL" id="U90267">
    <property type="protein sequence ID" value="AAC53595.1"/>
    <property type="molecule type" value="Genomic_DNA"/>
</dbReference>
<dbReference type="EMBL" id="AF016393">
    <property type="protein sequence ID" value="AAB69709.1"/>
    <property type="molecule type" value="Genomic_DNA"/>
</dbReference>
<dbReference type="EMBL" id="AF071086">
    <property type="protein sequence ID" value="AAF14854.1"/>
    <property type="molecule type" value="Genomic_DNA"/>
</dbReference>
<dbReference type="EMBL" id="CH466548">
    <property type="protein sequence ID" value="EDL00353.1"/>
    <property type="molecule type" value="Genomic_DNA"/>
</dbReference>
<dbReference type="CCDS" id="CCDS48290.1"/>
<dbReference type="RefSeq" id="NP_034002.2">
    <property type="nucleotide sequence ID" value="NM_009872.3"/>
</dbReference>
<dbReference type="SMR" id="O35926"/>
<dbReference type="ComplexPortal" id="CPX-3145">
    <property type="entry name" value="Cyclin-dependent protein kinase 5 holoenzyme complex, p39 variant"/>
</dbReference>
<dbReference type="FunCoup" id="O35926">
    <property type="interactions" value="76"/>
</dbReference>
<dbReference type="MINT" id="O35926"/>
<dbReference type="STRING" id="10090.ENSMUSP00000125322"/>
<dbReference type="GlyGen" id="O35926">
    <property type="glycosylation" value="1 site"/>
</dbReference>
<dbReference type="iPTMnet" id="O35926"/>
<dbReference type="PhosphoSitePlus" id="O35926"/>
<dbReference type="PaxDb" id="10090-ENSMUSP00000125322"/>
<dbReference type="PeptideAtlas" id="O35926"/>
<dbReference type="ProteomicsDB" id="279986"/>
<dbReference type="Antibodypedia" id="34293">
    <property type="antibodies" value="148 antibodies from 26 providers"/>
</dbReference>
<dbReference type="DNASU" id="12570"/>
<dbReference type="Ensembl" id="ENSMUST00000160379.4">
    <property type="protein sequence ID" value="ENSMUSP00000125322.3"/>
    <property type="gene ID" value="ENSMUSG00000090071.5"/>
</dbReference>
<dbReference type="GeneID" id="12570"/>
<dbReference type="KEGG" id="mmu:12570"/>
<dbReference type="UCSC" id="uc007bng.2">
    <property type="organism name" value="mouse"/>
</dbReference>
<dbReference type="AGR" id="MGI:1330828"/>
<dbReference type="CTD" id="8941"/>
<dbReference type="MGI" id="MGI:1330828">
    <property type="gene designation" value="Cdk5r2"/>
</dbReference>
<dbReference type="VEuPathDB" id="HostDB:ENSMUSG00000090071"/>
<dbReference type="eggNOG" id="KOG3932">
    <property type="taxonomic scope" value="Eukaryota"/>
</dbReference>
<dbReference type="GeneTree" id="ENSGT00390000008812"/>
<dbReference type="HOGENOM" id="CLU_034132_2_1_1"/>
<dbReference type="InParanoid" id="O35926"/>
<dbReference type="OMA" id="GDFMCRR"/>
<dbReference type="OrthoDB" id="7676799at2759"/>
<dbReference type="PhylomeDB" id="O35926"/>
<dbReference type="TreeFam" id="TF101036"/>
<dbReference type="BioGRID-ORCS" id="12570">
    <property type="hits" value="7 hits in 81 CRISPR screens"/>
</dbReference>
<dbReference type="PRO" id="PR:O35926"/>
<dbReference type="Proteomes" id="UP000000589">
    <property type="component" value="Chromosome 1"/>
</dbReference>
<dbReference type="RNAct" id="O35926">
    <property type="molecule type" value="protein"/>
</dbReference>
<dbReference type="Bgee" id="ENSMUSG00000090071">
    <property type="expression patterns" value="Expressed in superior frontal gyrus and 72 other cell types or tissues"/>
</dbReference>
<dbReference type="GO" id="GO:0005737">
    <property type="term" value="C:cytoplasm"/>
    <property type="evidence" value="ECO:0000314"/>
    <property type="project" value="MGI"/>
</dbReference>
<dbReference type="GO" id="GO:0005886">
    <property type="term" value="C:plasma membrane"/>
    <property type="evidence" value="ECO:0007669"/>
    <property type="project" value="UniProtKB-SubCell"/>
</dbReference>
<dbReference type="GO" id="GO:0098793">
    <property type="term" value="C:presynapse"/>
    <property type="evidence" value="ECO:0000314"/>
    <property type="project" value="SynGO"/>
</dbReference>
<dbReference type="GO" id="GO:0016533">
    <property type="term" value="C:protein kinase 5 complex"/>
    <property type="evidence" value="ECO:0007669"/>
    <property type="project" value="InterPro"/>
</dbReference>
<dbReference type="GO" id="GO:0003779">
    <property type="term" value="F:actin binding"/>
    <property type="evidence" value="ECO:0000353"/>
    <property type="project" value="ARUK-UCL"/>
</dbReference>
<dbReference type="GO" id="GO:0061575">
    <property type="term" value="F:cyclin-dependent protein serine/threonine kinase activator activity"/>
    <property type="evidence" value="ECO:0000314"/>
    <property type="project" value="ARUK-UCL"/>
</dbReference>
<dbReference type="GO" id="GO:0008092">
    <property type="term" value="F:cytoskeletal protein binding"/>
    <property type="evidence" value="ECO:0000304"/>
    <property type="project" value="MGI"/>
</dbReference>
<dbReference type="GO" id="GO:0008289">
    <property type="term" value="F:lipid binding"/>
    <property type="evidence" value="ECO:0007669"/>
    <property type="project" value="UniProtKB-KW"/>
</dbReference>
<dbReference type="GO" id="GO:0021549">
    <property type="term" value="P:cerebellum development"/>
    <property type="evidence" value="ECO:0000316"/>
    <property type="project" value="MGI"/>
</dbReference>
<dbReference type="GO" id="GO:0021766">
    <property type="term" value="P:hippocampus development"/>
    <property type="evidence" value="ECO:0000316"/>
    <property type="project" value="MGI"/>
</dbReference>
<dbReference type="GO" id="GO:0021819">
    <property type="term" value="P:layer formation in cerebral cortex"/>
    <property type="evidence" value="ECO:0000316"/>
    <property type="project" value="MGI"/>
</dbReference>
<dbReference type="GO" id="GO:0001764">
    <property type="term" value="P:neuron migration"/>
    <property type="evidence" value="ECO:0000316"/>
    <property type="project" value="MGI"/>
</dbReference>
<dbReference type="GO" id="GO:0045956">
    <property type="term" value="P:positive regulation of calcium ion-dependent exocytosis"/>
    <property type="evidence" value="ECO:0000314"/>
    <property type="project" value="MGI"/>
</dbReference>
<dbReference type="GO" id="GO:0051493">
    <property type="term" value="P:regulation of cytoskeleton organization"/>
    <property type="evidence" value="ECO:0000314"/>
    <property type="project" value="ARUK-UCL"/>
</dbReference>
<dbReference type="GO" id="GO:0021722">
    <property type="term" value="P:superior olivary nucleus maturation"/>
    <property type="evidence" value="ECO:0000316"/>
    <property type="project" value="MGI"/>
</dbReference>
<dbReference type="FunFam" id="1.10.472.10:FF:000025">
    <property type="entry name" value="Cyclin-dependent kinase 5 activator"/>
    <property type="match status" value="1"/>
</dbReference>
<dbReference type="Gene3D" id="1.10.472.10">
    <property type="entry name" value="Cyclin-like"/>
    <property type="match status" value="1"/>
</dbReference>
<dbReference type="InterPro" id="IPR004944">
    <property type="entry name" value="CDK5_activator"/>
</dbReference>
<dbReference type="InterPro" id="IPR036915">
    <property type="entry name" value="Cyclin-like_sf"/>
</dbReference>
<dbReference type="PANTHER" id="PTHR23401">
    <property type="entry name" value="CYCLIN DEPENDANT KINASE-5 ACTIVATOR"/>
    <property type="match status" value="1"/>
</dbReference>
<dbReference type="PANTHER" id="PTHR23401:SF3">
    <property type="entry name" value="CYCLIN-DEPENDENT KINASE 5 ACTIVATOR 2"/>
    <property type="match status" value="1"/>
</dbReference>
<dbReference type="Pfam" id="PF03261">
    <property type="entry name" value="CDK5_activator"/>
    <property type="match status" value="1"/>
</dbReference>
<dbReference type="PIRSF" id="PIRSF009324">
    <property type="entry name" value="Cdk5_activator"/>
    <property type="match status" value="1"/>
</dbReference>
<dbReference type="SUPFAM" id="SSF47954">
    <property type="entry name" value="Cyclin-like"/>
    <property type="match status" value="1"/>
</dbReference>
<feature type="initiator methionine" description="Removed">
    <location>
        <position position="1"/>
    </location>
</feature>
<feature type="propeptide" id="PRO_0000004802" evidence="2">
    <location>
        <begin position="2"/>
        <end status="unknown"/>
    </location>
</feature>
<feature type="chain" id="PRO_0000004803" description="Cyclin-dependent kinase 5 activator 2">
    <location>
        <begin status="unknown"/>
        <end position="369"/>
    </location>
</feature>
<feature type="region of interest" description="Disordered" evidence="3">
    <location>
        <begin position="1"/>
        <end position="55"/>
    </location>
</feature>
<feature type="region of interest" description="Disordered" evidence="3">
    <location>
        <begin position="72"/>
        <end position="176"/>
    </location>
</feature>
<feature type="region of interest" description="Disordered" evidence="3">
    <location>
        <begin position="330"/>
        <end position="369"/>
    </location>
</feature>
<feature type="compositionally biased region" description="Polar residues" evidence="3">
    <location>
        <begin position="1"/>
        <end position="11"/>
    </location>
</feature>
<feature type="compositionally biased region" description="Basic residues" evidence="3">
    <location>
        <begin position="74"/>
        <end position="84"/>
    </location>
</feature>
<feature type="compositionally biased region" description="Basic and acidic residues" evidence="3">
    <location>
        <begin position="99"/>
        <end position="112"/>
    </location>
</feature>
<feature type="compositionally biased region" description="Low complexity" evidence="3">
    <location>
        <begin position="122"/>
        <end position="144"/>
    </location>
</feature>
<feature type="compositionally biased region" description="Pro residues" evidence="3">
    <location>
        <begin position="145"/>
        <end position="171"/>
    </location>
</feature>
<feature type="compositionally biased region" description="Low complexity" evidence="3">
    <location>
        <begin position="331"/>
        <end position="352"/>
    </location>
</feature>
<feature type="modified residue" description="Phosphothreonine" evidence="5">
    <location>
        <position position="84"/>
    </location>
</feature>
<feature type="lipid moiety-binding region" description="N-myristoyl glycine" evidence="1">
    <location>
        <position position="2"/>
    </location>
</feature>
<feature type="sequence conflict" description="In Ref. 2; AAB69709." evidence="4" ref="2">
    <original>G</original>
    <variation>V</variation>
    <location>
        <position position="91"/>
    </location>
</feature>
<feature type="sequence conflict" description="In Ref. 1; AAC53595." evidence="4" ref="1">
    <original>G</original>
    <variation>S</variation>
    <location>
        <position position="172"/>
    </location>
</feature>
<feature type="sequence conflict" description="In Ref. 1; AAC53595." evidence="4" ref="1">
    <original>G</original>
    <variation>R</variation>
    <location>
        <position position="191"/>
    </location>
</feature>
<feature type="sequence conflict" description="In Ref. 1; AAC53595." evidence="4" ref="1">
    <original>R</original>
    <variation>S</variation>
    <location>
        <position position="197"/>
    </location>
</feature>
<feature type="sequence conflict" description="In Ref. 2; AAB69709." evidence="4" ref="2">
    <original>L</original>
    <variation>W</variation>
    <location>
        <position position="220"/>
    </location>
</feature>
<feature type="sequence conflict" description="In Ref. 1; AAC53595." evidence="4" ref="1">
    <original>R</original>
    <variation>S</variation>
    <location>
        <position position="248"/>
    </location>
</feature>
<feature type="sequence conflict" description="In Ref. 2; AAB69709." evidence="4" ref="2">
    <original>A</original>
    <variation>G</variation>
    <location>
        <position position="253"/>
    </location>
</feature>
<sequence>MGTVLSLSPASSAKGRRPGGLPEEKKKAPPAGDEALGGYGAPPAGKGGKGESRLKRPSVLISALTWKRLVAASAKKKKGSKKVTPKPASTGPDPLVQQRNRENLLRKGRDGPDGGGTAKPLAVPVPTVPTTAATCEPPSGGSAAAPPPGSGGGKPPPPPPPAPQAAPPAPGGSPRRVIVQASTGELLRCLGDFVCRRCYRLKELSPGELVGWFRGVDRSLLLQGWQDQAFITPANLVFVYLLCRESLRGDELASAAELQAAFLTCLYLAYSYMGNEISYPLKPFLVEPDKERFWQRCLRLIQRLSPQMLRLNADPHFFTQVFQDLKNEGEAAASTGGPPSGSSASTTSSSSARDSCATGAKHWTMNLDR</sequence>
<comment type="function">
    <text>Activator of CDK5/TPKII.</text>
</comment>
<comment type="subunit">
    <text>Heterodimer of a catalytic subunit and a regulatory subunit.</text>
</comment>
<comment type="subcellular location">
    <subcellularLocation>
        <location evidence="1">Cell membrane</location>
        <topology evidence="1">Lipid-anchor</topology>
        <orientation evidence="1">Cytoplasmic side</orientation>
    </subcellularLocation>
</comment>
<comment type="PTM">
    <text evidence="1">Myristoylated. The Gly-2-Ala mutant is absent of the cell periphery, suggesting that a proper myristoylation signal is essential for the proper distribution of CDK5R2 (p39) (By similarity).</text>
</comment>
<comment type="similarity">
    <text evidence="4">Belongs to the cyclin-dependent kinase 5 activator family.</text>
</comment>
<organism>
    <name type="scientific">Mus musculus</name>
    <name type="common">Mouse</name>
    <dbReference type="NCBI Taxonomy" id="10090"/>
    <lineage>
        <taxon>Eukaryota</taxon>
        <taxon>Metazoa</taxon>
        <taxon>Chordata</taxon>
        <taxon>Craniata</taxon>
        <taxon>Vertebrata</taxon>
        <taxon>Euteleostomi</taxon>
        <taxon>Mammalia</taxon>
        <taxon>Eutheria</taxon>
        <taxon>Euarchontoglires</taxon>
        <taxon>Glires</taxon>
        <taxon>Rodentia</taxon>
        <taxon>Myomorpha</taxon>
        <taxon>Muroidea</taxon>
        <taxon>Muridae</taxon>
        <taxon>Murinae</taxon>
        <taxon>Mus</taxon>
        <taxon>Mus</taxon>
    </lineage>
</organism>
<reference key="1">
    <citation type="journal article" date="1998" name="Biochim. Biophys. Acta">
        <title>Molecular cloning and characterisation of a mouse gene encoding an isoform of the neuronal cyclin-dependent kinase 5 (CDK5) activator.</title>
        <authorList>
            <person name="Nilden F."/>
            <person name="Baeckstroem A."/>
            <person name="Bark C."/>
        </authorList>
    </citation>
    <scope>NUCLEOTIDE SEQUENCE [GENOMIC DNA]</scope>
</reference>
<reference key="2">
    <citation type="submission" date="1997-07" db="EMBL/GenBank/DDBJ databases">
        <title>Comparative analysis of gene expression of the cyclin-dependent kinase 5 (cdk5) activators p35 and p39 in the rat CNS and embryonic development revealed distinctive overlap with cdk5.</title>
        <authorList>
            <person name="Zheng M."/>
            <person name="Leung C.L."/>
            <person name="Liem R.K.H."/>
        </authorList>
    </citation>
    <scope>NUCLEOTIDE SEQUENCE [GENOMIC DNA]</scope>
    <source>
        <strain>129/SvJ</strain>
    </source>
</reference>
<reference key="3">
    <citation type="submission" date="1998-06" db="EMBL/GenBank/DDBJ databases">
        <title>Characterization of the mouse gene encoding p39, an isoform of neuronal cdk5 activator.</title>
        <authorList>
            <person name="Treuner M."/>
            <person name="Qi Z."/>
            <person name="Zhu X."/>
            <person name="Wang J.H."/>
        </authorList>
    </citation>
    <scope>NUCLEOTIDE SEQUENCE [GENOMIC DNA]</scope>
    <source>
        <strain>BALB/cJ</strain>
    </source>
</reference>
<reference key="4">
    <citation type="submission" date="2005-07" db="EMBL/GenBank/DDBJ databases">
        <authorList>
            <person name="Mural R.J."/>
            <person name="Adams M.D."/>
            <person name="Myers E.W."/>
            <person name="Smith H.O."/>
            <person name="Venter J.C."/>
        </authorList>
    </citation>
    <scope>NUCLEOTIDE SEQUENCE [LARGE SCALE GENOMIC DNA]</scope>
</reference>
<reference key="5">
    <citation type="journal article" date="2010" name="Cell">
        <title>A tissue-specific atlas of mouse protein phosphorylation and expression.</title>
        <authorList>
            <person name="Huttlin E.L."/>
            <person name="Jedrychowski M.P."/>
            <person name="Elias J.E."/>
            <person name="Goswami T."/>
            <person name="Rad R."/>
            <person name="Beausoleil S.A."/>
            <person name="Villen J."/>
            <person name="Haas W."/>
            <person name="Sowa M.E."/>
            <person name="Gygi S.P."/>
        </authorList>
    </citation>
    <scope>PHOSPHORYLATION [LARGE SCALE ANALYSIS] AT THR-84</scope>
    <scope>IDENTIFICATION BY MASS SPECTROMETRY [LARGE SCALE ANALYSIS]</scope>
    <source>
        <tissue>Brain</tissue>
    </source>
</reference>
<keyword id="KW-1003">Cell membrane</keyword>
<keyword id="KW-0446">Lipid-binding</keyword>
<keyword id="KW-0449">Lipoprotein</keyword>
<keyword id="KW-0472">Membrane</keyword>
<keyword id="KW-0519">Myristate</keyword>
<keyword id="KW-0597">Phosphoprotein</keyword>
<keyword id="KW-1185">Reference proteome</keyword>